<reference key="1">
    <citation type="journal article" date="2002" name="Genome Res.">
        <title>The genome of Methanosarcina acetivorans reveals extensive metabolic and physiological diversity.</title>
        <authorList>
            <person name="Galagan J.E."/>
            <person name="Nusbaum C."/>
            <person name="Roy A."/>
            <person name="Endrizzi M.G."/>
            <person name="Macdonald P."/>
            <person name="FitzHugh W."/>
            <person name="Calvo S."/>
            <person name="Engels R."/>
            <person name="Smirnov S."/>
            <person name="Atnoor D."/>
            <person name="Brown A."/>
            <person name="Allen N."/>
            <person name="Naylor J."/>
            <person name="Stange-Thomann N."/>
            <person name="DeArellano K."/>
            <person name="Johnson R."/>
            <person name="Linton L."/>
            <person name="McEwan P."/>
            <person name="McKernan K."/>
            <person name="Talamas J."/>
            <person name="Tirrell A."/>
            <person name="Ye W."/>
            <person name="Zimmer A."/>
            <person name="Barber R.D."/>
            <person name="Cann I."/>
            <person name="Graham D.E."/>
            <person name="Grahame D.A."/>
            <person name="Guss A.M."/>
            <person name="Hedderich R."/>
            <person name="Ingram-Smith C."/>
            <person name="Kuettner H.C."/>
            <person name="Krzycki J.A."/>
            <person name="Leigh J.A."/>
            <person name="Li W."/>
            <person name="Liu J."/>
            <person name="Mukhopadhyay B."/>
            <person name="Reeve J.N."/>
            <person name="Smith K."/>
            <person name="Springer T.A."/>
            <person name="Umayam L.A."/>
            <person name="White O."/>
            <person name="White R.H."/>
            <person name="de Macario E.C."/>
            <person name="Ferry J.G."/>
            <person name="Jarrell K.F."/>
            <person name="Jing H."/>
            <person name="Macario A.J.L."/>
            <person name="Paulsen I.T."/>
            <person name="Pritchett M."/>
            <person name="Sowers K.R."/>
            <person name="Swanson R.V."/>
            <person name="Zinder S.H."/>
            <person name="Lander E."/>
            <person name="Metcalf W.W."/>
            <person name="Birren B."/>
        </authorList>
    </citation>
    <scope>NUCLEOTIDE SEQUENCE [LARGE SCALE GENOMIC DNA]</scope>
    <source>
        <strain>ATCC 35395 / DSM 2834 / JCM 12185 / C2A</strain>
    </source>
</reference>
<feature type="chain" id="PRO_0000363760" description="O-phosphoserine--tRNA(Cys) ligase">
    <location>
        <begin position="1"/>
        <end position="539"/>
    </location>
</feature>
<feature type="binding site" evidence="1">
    <location>
        <begin position="188"/>
        <end position="190"/>
    </location>
    <ligand>
        <name>substrate</name>
    </ligand>
</feature>
<feature type="binding site" evidence="1">
    <location>
        <begin position="233"/>
        <end position="235"/>
    </location>
    <ligand>
        <name>substrate</name>
    </ligand>
</feature>
<feature type="binding site" evidence="1">
    <location>
        <begin position="275"/>
        <end position="276"/>
    </location>
    <ligand>
        <name>substrate</name>
    </ligand>
</feature>
<feature type="binding site" evidence="1">
    <location>
        <position position="327"/>
    </location>
    <ligand>
        <name>substrate</name>
    </ligand>
</feature>
<evidence type="ECO:0000255" key="1">
    <source>
        <dbReference type="HAMAP-Rule" id="MF_01674"/>
    </source>
</evidence>
<gene>
    <name evidence="1" type="primary">sepS</name>
    <name type="synonym">pheRS</name>
    <name type="ordered locus">MA_0090</name>
</gene>
<accession>Q8TUH7</accession>
<sequence length="539" mass="60781">MRFDPEKIKKDAKENFDLTWNEGKKMVKTPTLNERYPRTTFRYGKAHPVYDTIQKLREAYLRMGFEEMMNPLIVDEKEVHKQFGSEALAVLDRCFYLAGLPRPNVGISDERIAQINGILGDIGDEGIDKVRKVLHAYKKGKVEGDDLVPEISAALEVSDALVADMIEKVFPEFKELVAQASTKTLRSHMTSGWFISLGALLERKEPPFHFFSIDRCFRREQQEDASRLMTYYSASCVIMDENVTVDHGKAVAEGLLSQFGFEKFLFRPDEKRSKYYVPDTQTEVFAFHPKLVGSNSKYSDGWIEIATFGIYSPTALAEYDIPCPVMNLGLGVERLAMILHDAPDIRSLTYPQIPQYSEWEMSDSELAKQVFVDKTPETPEGREIADAVVAQCELHGEEPSPCEFPAWEGEVCGRKVKVSVIEPEENTKLCGPAAFNEVVTYQGDILGIPNTKKWQKAFENHSAMAGIRFIEAFAAQAAREIEEAAMSGADEHIVRVRIVKVPSEVNIKIGATAQRYITGKNKKIDMRGPIFTSAKAEFE</sequence>
<keyword id="KW-0030">Aminoacyl-tRNA synthetase</keyword>
<keyword id="KW-0067">ATP-binding</keyword>
<keyword id="KW-0436">Ligase</keyword>
<keyword id="KW-0547">Nucleotide-binding</keyword>
<keyword id="KW-0648">Protein biosynthesis</keyword>
<keyword id="KW-1185">Reference proteome</keyword>
<protein>
    <recommendedName>
        <fullName evidence="1">O-phosphoserine--tRNA(Cys) ligase</fullName>
        <shortName evidence="1">O-phosphoserine--tRNA ligase</shortName>
        <ecNumber evidence="1">6.1.1.27</ecNumber>
    </recommendedName>
    <alternativeName>
        <fullName evidence="1">Non-canonical O-phosphoseryl-tRNA(Cys) synthetase</fullName>
    </alternativeName>
    <alternativeName>
        <fullName evidence="1">O-phosphoseryl-tRNA(Cys) synthetase</fullName>
        <shortName evidence="1">SepRS</shortName>
    </alternativeName>
</protein>
<proteinExistence type="inferred from homology"/>
<organism>
    <name type="scientific">Methanosarcina acetivorans (strain ATCC 35395 / DSM 2834 / JCM 12185 / C2A)</name>
    <dbReference type="NCBI Taxonomy" id="188937"/>
    <lineage>
        <taxon>Archaea</taxon>
        <taxon>Methanobacteriati</taxon>
        <taxon>Methanobacteriota</taxon>
        <taxon>Stenosarchaea group</taxon>
        <taxon>Methanomicrobia</taxon>
        <taxon>Methanosarcinales</taxon>
        <taxon>Methanosarcinaceae</taxon>
        <taxon>Methanosarcina</taxon>
    </lineage>
</organism>
<comment type="function">
    <text evidence="1">Catalyzes the attachment of O-phosphoserine (Sep) to tRNA(Cys).</text>
</comment>
<comment type="catalytic activity">
    <reaction evidence="1">
        <text>tRNA(Cys) + O-phospho-L-serine + ATP = O-phospho-L-seryl-tRNA(Cys) + AMP + diphosphate</text>
        <dbReference type="Rhea" id="RHEA:25678"/>
        <dbReference type="Rhea" id="RHEA-COMP:9661"/>
        <dbReference type="Rhea" id="RHEA-COMP:9719"/>
        <dbReference type="ChEBI" id="CHEBI:30616"/>
        <dbReference type="ChEBI" id="CHEBI:33019"/>
        <dbReference type="ChEBI" id="CHEBI:57524"/>
        <dbReference type="ChEBI" id="CHEBI:78442"/>
        <dbReference type="ChEBI" id="CHEBI:78551"/>
        <dbReference type="ChEBI" id="CHEBI:456215"/>
        <dbReference type="EC" id="6.1.1.27"/>
    </reaction>
</comment>
<comment type="subunit">
    <text evidence="1">Homotetramer. Interacts with SepCysS.</text>
</comment>
<comment type="similarity">
    <text evidence="1">Belongs to the class-II aminoacyl-tRNA synthetase family. O-phosphoseryl-tRNA(Cys) synthetase subfamily.</text>
</comment>
<name>SEPS_METAC</name>
<dbReference type="EC" id="6.1.1.27" evidence="1"/>
<dbReference type="EMBL" id="AE010299">
    <property type="protein sequence ID" value="AAM03544.1"/>
    <property type="molecule type" value="Genomic_DNA"/>
</dbReference>
<dbReference type="RefSeq" id="WP_011020149.1">
    <property type="nucleotide sequence ID" value="NC_003552.1"/>
</dbReference>
<dbReference type="SMR" id="Q8TUH7"/>
<dbReference type="FunCoup" id="Q8TUH7">
    <property type="interactions" value="22"/>
</dbReference>
<dbReference type="STRING" id="188937.MA_0090"/>
<dbReference type="EnsemblBacteria" id="AAM03544">
    <property type="protein sequence ID" value="AAM03544"/>
    <property type="gene ID" value="MA_0090"/>
</dbReference>
<dbReference type="GeneID" id="1471982"/>
<dbReference type="KEGG" id="mac:MA_0090"/>
<dbReference type="HOGENOM" id="CLU_506822_0_0_2"/>
<dbReference type="InParanoid" id="Q8TUH7"/>
<dbReference type="OrthoDB" id="145125at2157"/>
<dbReference type="PhylomeDB" id="Q8TUH7"/>
<dbReference type="Proteomes" id="UP000002487">
    <property type="component" value="Chromosome"/>
</dbReference>
<dbReference type="GO" id="GO:0005737">
    <property type="term" value="C:cytoplasm"/>
    <property type="evidence" value="ECO:0000318"/>
    <property type="project" value="GO_Central"/>
</dbReference>
<dbReference type="GO" id="GO:0005524">
    <property type="term" value="F:ATP binding"/>
    <property type="evidence" value="ECO:0007669"/>
    <property type="project" value="UniProtKB-UniRule"/>
</dbReference>
<dbReference type="GO" id="GO:0004826">
    <property type="term" value="F:phenylalanine-tRNA ligase activity"/>
    <property type="evidence" value="ECO:0000318"/>
    <property type="project" value="GO_Central"/>
</dbReference>
<dbReference type="GO" id="GO:0043816">
    <property type="term" value="F:phosphoserine-tRNA(Cys) ligase activity"/>
    <property type="evidence" value="ECO:0007669"/>
    <property type="project" value="UniProtKB-EC"/>
</dbReference>
<dbReference type="GO" id="GO:0000049">
    <property type="term" value="F:tRNA binding"/>
    <property type="evidence" value="ECO:0007669"/>
    <property type="project" value="InterPro"/>
</dbReference>
<dbReference type="GO" id="GO:0006432">
    <property type="term" value="P:phenylalanyl-tRNA aminoacylation"/>
    <property type="evidence" value="ECO:0000318"/>
    <property type="project" value="GO_Central"/>
</dbReference>
<dbReference type="FunFam" id="3.30.930.10:FF:000139">
    <property type="entry name" value="O-phosphoserine--tRNA(Cys) ligase"/>
    <property type="match status" value="1"/>
</dbReference>
<dbReference type="Gene3D" id="3.30.930.10">
    <property type="entry name" value="Bira Bifunctional Protein, Domain 2"/>
    <property type="match status" value="1"/>
</dbReference>
<dbReference type="HAMAP" id="MF_01674">
    <property type="entry name" value="Sep_tRNA_synth"/>
    <property type="match status" value="1"/>
</dbReference>
<dbReference type="InterPro" id="IPR006195">
    <property type="entry name" value="aa-tRNA-synth_II"/>
</dbReference>
<dbReference type="InterPro" id="IPR045864">
    <property type="entry name" value="aa-tRNA-synth_II/BPL/LPL"/>
</dbReference>
<dbReference type="InterPro" id="IPR005246">
    <property type="entry name" value="O-Pseryl-tRNA(Cys)_ligase"/>
</dbReference>
<dbReference type="InterPro" id="IPR002319">
    <property type="entry name" value="Phenylalanyl-tRNA_Synthase"/>
</dbReference>
<dbReference type="InterPro" id="IPR041590">
    <property type="entry name" value="SepRS_C"/>
</dbReference>
<dbReference type="NCBIfam" id="TIGR00470">
    <property type="entry name" value="sepS"/>
    <property type="match status" value="1"/>
</dbReference>
<dbReference type="Pfam" id="PF18006">
    <property type="entry name" value="SepRS_C"/>
    <property type="match status" value="1"/>
</dbReference>
<dbReference type="Pfam" id="PF01409">
    <property type="entry name" value="tRNA-synt_2d"/>
    <property type="match status" value="1"/>
</dbReference>
<dbReference type="SUPFAM" id="SSF55681">
    <property type="entry name" value="Class II aaRS and biotin synthetases"/>
    <property type="match status" value="1"/>
</dbReference>
<dbReference type="PROSITE" id="PS50862">
    <property type="entry name" value="AA_TRNA_LIGASE_II"/>
    <property type="match status" value="1"/>
</dbReference>